<reference key="1">
    <citation type="journal article" date="2001" name="Proc. Natl. Acad. Sci. U.S.A.">
        <title>Complete genomic sequence of Pasteurella multocida Pm70.</title>
        <authorList>
            <person name="May B.J."/>
            <person name="Zhang Q."/>
            <person name="Li L.L."/>
            <person name="Paustian M.L."/>
            <person name="Whittam T.S."/>
            <person name="Kapur V."/>
        </authorList>
    </citation>
    <scope>NUCLEOTIDE SEQUENCE [LARGE SCALE GENOMIC DNA]</scope>
    <source>
        <strain>Pm70</strain>
    </source>
</reference>
<feature type="chain" id="PRO_0000111385" description="Small ribosomal subunit protein uS9">
    <location>
        <begin position="1"/>
        <end position="130"/>
    </location>
</feature>
<evidence type="ECO:0000255" key="1">
    <source>
        <dbReference type="HAMAP-Rule" id="MF_00532"/>
    </source>
</evidence>
<evidence type="ECO:0000305" key="2"/>
<keyword id="KW-1185">Reference proteome</keyword>
<keyword id="KW-0687">Ribonucleoprotein</keyword>
<keyword id="KW-0689">Ribosomal protein</keyword>
<comment type="similarity">
    <text evidence="1">Belongs to the universal ribosomal protein uS9 family.</text>
</comment>
<name>RS9_PASMU</name>
<accession>Q9CNB1</accession>
<protein>
    <recommendedName>
        <fullName evidence="1">Small ribosomal subunit protein uS9</fullName>
    </recommendedName>
    <alternativeName>
        <fullName evidence="2">30S ribosomal protein S9</fullName>
    </alternativeName>
</protein>
<sequence>MAENQNYGTGRRKSSSARVFIKPGSGKITINQRDLDVYFGRETARMIVRQPLELVEMTEKLDLYVTVKGGGISGQAGAIRHGITRALIEYDESLRSVLRAAGFVTRDARQVERKKVGLRKARRRPQFSKR</sequence>
<gene>
    <name evidence="1" type="primary">rpsI</name>
    <name evidence="1" type="synonym">rps9</name>
    <name type="ordered locus">PM0521</name>
</gene>
<proteinExistence type="inferred from homology"/>
<organism>
    <name type="scientific">Pasteurella multocida (strain Pm70)</name>
    <dbReference type="NCBI Taxonomy" id="272843"/>
    <lineage>
        <taxon>Bacteria</taxon>
        <taxon>Pseudomonadati</taxon>
        <taxon>Pseudomonadota</taxon>
        <taxon>Gammaproteobacteria</taxon>
        <taxon>Pasteurellales</taxon>
        <taxon>Pasteurellaceae</taxon>
        <taxon>Pasteurella</taxon>
    </lineage>
</organism>
<dbReference type="EMBL" id="AE004439">
    <property type="protein sequence ID" value="AAK02605.1"/>
    <property type="molecule type" value="Genomic_DNA"/>
</dbReference>
<dbReference type="RefSeq" id="WP_005721962.1">
    <property type="nucleotide sequence ID" value="NC_002663.1"/>
</dbReference>
<dbReference type="SMR" id="Q9CNB1"/>
<dbReference type="STRING" id="272843.PM0521"/>
<dbReference type="EnsemblBacteria" id="AAK02605">
    <property type="protein sequence ID" value="AAK02605"/>
    <property type="gene ID" value="PM0521"/>
</dbReference>
<dbReference type="GeneID" id="77208133"/>
<dbReference type="KEGG" id="pmu:PM0521"/>
<dbReference type="HOGENOM" id="CLU_046483_2_1_6"/>
<dbReference type="OrthoDB" id="9803965at2"/>
<dbReference type="Proteomes" id="UP000000809">
    <property type="component" value="Chromosome"/>
</dbReference>
<dbReference type="GO" id="GO:0022627">
    <property type="term" value="C:cytosolic small ribosomal subunit"/>
    <property type="evidence" value="ECO:0007669"/>
    <property type="project" value="TreeGrafter"/>
</dbReference>
<dbReference type="GO" id="GO:0003723">
    <property type="term" value="F:RNA binding"/>
    <property type="evidence" value="ECO:0007669"/>
    <property type="project" value="TreeGrafter"/>
</dbReference>
<dbReference type="GO" id="GO:0003735">
    <property type="term" value="F:structural constituent of ribosome"/>
    <property type="evidence" value="ECO:0007669"/>
    <property type="project" value="InterPro"/>
</dbReference>
<dbReference type="GO" id="GO:0006412">
    <property type="term" value="P:translation"/>
    <property type="evidence" value="ECO:0007669"/>
    <property type="project" value="UniProtKB-UniRule"/>
</dbReference>
<dbReference type="FunFam" id="3.30.230.10:FF:000001">
    <property type="entry name" value="30S ribosomal protein S9"/>
    <property type="match status" value="1"/>
</dbReference>
<dbReference type="Gene3D" id="3.30.230.10">
    <property type="match status" value="1"/>
</dbReference>
<dbReference type="HAMAP" id="MF_00532_B">
    <property type="entry name" value="Ribosomal_uS9_B"/>
    <property type="match status" value="1"/>
</dbReference>
<dbReference type="InterPro" id="IPR020568">
    <property type="entry name" value="Ribosomal_Su5_D2-typ_SF"/>
</dbReference>
<dbReference type="InterPro" id="IPR000754">
    <property type="entry name" value="Ribosomal_uS9"/>
</dbReference>
<dbReference type="InterPro" id="IPR023035">
    <property type="entry name" value="Ribosomal_uS9_bac/plastid"/>
</dbReference>
<dbReference type="InterPro" id="IPR020574">
    <property type="entry name" value="Ribosomal_uS9_CS"/>
</dbReference>
<dbReference type="InterPro" id="IPR014721">
    <property type="entry name" value="Ribsml_uS5_D2-typ_fold_subgr"/>
</dbReference>
<dbReference type="NCBIfam" id="NF001099">
    <property type="entry name" value="PRK00132.1"/>
    <property type="match status" value="1"/>
</dbReference>
<dbReference type="PANTHER" id="PTHR21569">
    <property type="entry name" value="RIBOSOMAL PROTEIN S9"/>
    <property type="match status" value="1"/>
</dbReference>
<dbReference type="PANTHER" id="PTHR21569:SF1">
    <property type="entry name" value="SMALL RIBOSOMAL SUBUNIT PROTEIN US9M"/>
    <property type="match status" value="1"/>
</dbReference>
<dbReference type="Pfam" id="PF00380">
    <property type="entry name" value="Ribosomal_S9"/>
    <property type="match status" value="1"/>
</dbReference>
<dbReference type="SUPFAM" id="SSF54211">
    <property type="entry name" value="Ribosomal protein S5 domain 2-like"/>
    <property type="match status" value="1"/>
</dbReference>
<dbReference type="PROSITE" id="PS00360">
    <property type="entry name" value="RIBOSOMAL_S9"/>
    <property type="match status" value="1"/>
</dbReference>